<protein>
    <recommendedName>
        <fullName evidence="1">Phosphoribosyl-AMP cyclohydrolase</fullName>
        <shortName evidence="1">PRA-CH</shortName>
        <ecNumber evidence="1">3.5.4.19</ecNumber>
    </recommendedName>
</protein>
<accession>C1EMQ8</accession>
<sequence>MKPNFSKGLLPAVVIEEGTKEVLMLAYMNEEAYEKTLKTKRTWFYSRSRRSLWNKGETSGHVQHVQSLYLDCDQDSIVVVVKQVGPACHTGEKTCFHYKII</sequence>
<evidence type="ECO:0000255" key="1">
    <source>
        <dbReference type="HAMAP-Rule" id="MF_01021"/>
    </source>
</evidence>
<feature type="chain" id="PRO_1000149063" description="Phosphoribosyl-AMP cyclohydrolase">
    <location>
        <begin position="1"/>
        <end position="101"/>
    </location>
</feature>
<feature type="binding site" evidence="1">
    <location>
        <position position="71"/>
    </location>
    <ligand>
        <name>Mg(2+)</name>
        <dbReference type="ChEBI" id="CHEBI:18420"/>
    </ligand>
</feature>
<feature type="binding site" evidence="1">
    <location>
        <position position="72"/>
    </location>
    <ligand>
        <name>Zn(2+)</name>
        <dbReference type="ChEBI" id="CHEBI:29105"/>
        <note>ligand shared between dimeric partners</note>
    </ligand>
</feature>
<feature type="binding site" evidence="1">
    <location>
        <position position="73"/>
    </location>
    <ligand>
        <name>Mg(2+)</name>
        <dbReference type="ChEBI" id="CHEBI:18420"/>
    </ligand>
</feature>
<feature type="binding site" evidence="1">
    <location>
        <position position="75"/>
    </location>
    <ligand>
        <name>Mg(2+)</name>
        <dbReference type="ChEBI" id="CHEBI:18420"/>
    </ligand>
</feature>
<feature type="binding site" evidence="1">
    <location>
        <position position="88"/>
    </location>
    <ligand>
        <name>Zn(2+)</name>
        <dbReference type="ChEBI" id="CHEBI:29105"/>
        <note>ligand shared between dimeric partners</note>
    </ligand>
</feature>
<feature type="binding site" evidence="1">
    <location>
        <position position="95"/>
    </location>
    <ligand>
        <name>Zn(2+)</name>
        <dbReference type="ChEBI" id="CHEBI:29105"/>
        <note>ligand shared between dimeric partners</note>
    </ligand>
</feature>
<name>HIS3_BACC3</name>
<keyword id="KW-0028">Amino-acid biosynthesis</keyword>
<keyword id="KW-0963">Cytoplasm</keyword>
<keyword id="KW-0368">Histidine biosynthesis</keyword>
<keyword id="KW-0378">Hydrolase</keyword>
<keyword id="KW-0460">Magnesium</keyword>
<keyword id="KW-0479">Metal-binding</keyword>
<keyword id="KW-0862">Zinc</keyword>
<gene>
    <name evidence="1" type="primary">hisI</name>
    <name type="ordered locus">BCA_1466</name>
</gene>
<comment type="function">
    <text evidence="1">Catalyzes the hydrolysis of the adenine ring of phosphoribosyl-AMP.</text>
</comment>
<comment type="catalytic activity">
    <reaction evidence="1">
        <text>1-(5-phospho-beta-D-ribosyl)-5'-AMP + H2O = 1-(5-phospho-beta-D-ribosyl)-5-[(5-phospho-beta-D-ribosylamino)methylideneamino]imidazole-4-carboxamide</text>
        <dbReference type="Rhea" id="RHEA:20049"/>
        <dbReference type="ChEBI" id="CHEBI:15377"/>
        <dbReference type="ChEBI" id="CHEBI:58435"/>
        <dbReference type="ChEBI" id="CHEBI:59457"/>
        <dbReference type="EC" id="3.5.4.19"/>
    </reaction>
</comment>
<comment type="cofactor">
    <cofactor evidence="1">
        <name>Mg(2+)</name>
        <dbReference type="ChEBI" id="CHEBI:18420"/>
    </cofactor>
    <text evidence="1">Binds 1 Mg(2+) ion per subunit.</text>
</comment>
<comment type="cofactor">
    <cofactor evidence="1">
        <name>Zn(2+)</name>
        <dbReference type="ChEBI" id="CHEBI:29105"/>
    </cofactor>
    <text evidence="1">Binds 1 zinc ion per subunit.</text>
</comment>
<comment type="pathway">
    <text evidence="1">Amino-acid biosynthesis; L-histidine biosynthesis; L-histidine from 5-phospho-alpha-D-ribose 1-diphosphate: step 3/9.</text>
</comment>
<comment type="subunit">
    <text evidence="1">Homodimer.</text>
</comment>
<comment type="subcellular location">
    <subcellularLocation>
        <location evidence="1">Cytoplasm</location>
    </subcellularLocation>
</comment>
<comment type="similarity">
    <text evidence="1">Belongs to the PRA-CH family.</text>
</comment>
<organism>
    <name type="scientific">Bacillus cereus (strain 03BB102)</name>
    <dbReference type="NCBI Taxonomy" id="572264"/>
    <lineage>
        <taxon>Bacteria</taxon>
        <taxon>Bacillati</taxon>
        <taxon>Bacillota</taxon>
        <taxon>Bacilli</taxon>
        <taxon>Bacillales</taxon>
        <taxon>Bacillaceae</taxon>
        <taxon>Bacillus</taxon>
        <taxon>Bacillus cereus group</taxon>
    </lineage>
</organism>
<reference key="1">
    <citation type="submission" date="2009-02" db="EMBL/GenBank/DDBJ databases">
        <title>Genome sequence of Bacillus cereus 03BB102.</title>
        <authorList>
            <person name="Dodson R.J."/>
            <person name="Jackson P."/>
            <person name="Munk A.C."/>
            <person name="Brettin T."/>
            <person name="Bruce D."/>
            <person name="Detter C."/>
            <person name="Tapia R."/>
            <person name="Han C."/>
            <person name="Sutton G."/>
            <person name="Sims D."/>
        </authorList>
    </citation>
    <scope>NUCLEOTIDE SEQUENCE [LARGE SCALE GENOMIC DNA]</scope>
    <source>
        <strain>03BB102</strain>
    </source>
</reference>
<proteinExistence type="inferred from homology"/>
<dbReference type="EC" id="3.5.4.19" evidence="1"/>
<dbReference type="EMBL" id="CP001407">
    <property type="protein sequence ID" value="ACO29792.1"/>
    <property type="molecule type" value="Genomic_DNA"/>
</dbReference>
<dbReference type="RefSeq" id="WP_000803980.1">
    <property type="nucleotide sequence ID" value="NZ_CP009318.1"/>
</dbReference>
<dbReference type="SMR" id="C1EMQ8"/>
<dbReference type="KEGG" id="bcx:BCA_1466"/>
<dbReference type="PATRIC" id="fig|572264.18.peg.1416"/>
<dbReference type="UniPathway" id="UPA00031">
    <property type="reaction ID" value="UER00008"/>
</dbReference>
<dbReference type="Proteomes" id="UP000002210">
    <property type="component" value="Chromosome"/>
</dbReference>
<dbReference type="GO" id="GO:0005737">
    <property type="term" value="C:cytoplasm"/>
    <property type="evidence" value="ECO:0007669"/>
    <property type="project" value="UniProtKB-SubCell"/>
</dbReference>
<dbReference type="GO" id="GO:0000287">
    <property type="term" value="F:magnesium ion binding"/>
    <property type="evidence" value="ECO:0007669"/>
    <property type="project" value="UniProtKB-UniRule"/>
</dbReference>
<dbReference type="GO" id="GO:0004635">
    <property type="term" value="F:phosphoribosyl-AMP cyclohydrolase activity"/>
    <property type="evidence" value="ECO:0007669"/>
    <property type="project" value="UniProtKB-UniRule"/>
</dbReference>
<dbReference type="GO" id="GO:0008270">
    <property type="term" value="F:zinc ion binding"/>
    <property type="evidence" value="ECO:0007669"/>
    <property type="project" value="UniProtKB-UniRule"/>
</dbReference>
<dbReference type="GO" id="GO:0000105">
    <property type="term" value="P:L-histidine biosynthetic process"/>
    <property type="evidence" value="ECO:0007669"/>
    <property type="project" value="UniProtKB-UniRule"/>
</dbReference>
<dbReference type="FunFam" id="3.10.20.810:FF:000001">
    <property type="entry name" value="Histidine biosynthesis bifunctional protein HisIE"/>
    <property type="match status" value="1"/>
</dbReference>
<dbReference type="Gene3D" id="3.10.20.810">
    <property type="entry name" value="Phosphoribosyl-AMP cyclohydrolase"/>
    <property type="match status" value="1"/>
</dbReference>
<dbReference type="HAMAP" id="MF_01021">
    <property type="entry name" value="HisI"/>
    <property type="match status" value="1"/>
</dbReference>
<dbReference type="InterPro" id="IPR026660">
    <property type="entry name" value="PRA-CH"/>
</dbReference>
<dbReference type="InterPro" id="IPR002496">
    <property type="entry name" value="PRib_AMP_CycHydrolase_dom"/>
</dbReference>
<dbReference type="InterPro" id="IPR038019">
    <property type="entry name" value="PRib_AMP_CycHydrolase_sf"/>
</dbReference>
<dbReference type="NCBIfam" id="NF000768">
    <property type="entry name" value="PRK00051.1"/>
    <property type="match status" value="1"/>
</dbReference>
<dbReference type="PANTHER" id="PTHR42945">
    <property type="entry name" value="HISTIDINE BIOSYNTHESIS BIFUNCTIONAL PROTEIN"/>
    <property type="match status" value="1"/>
</dbReference>
<dbReference type="PANTHER" id="PTHR42945:SF1">
    <property type="entry name" value="HISTIDINE BIOSYNTHESIS BIFUNCTIONAL PROTEIN HIS7"/>
    <property type="match status" value="1"/>
</dbReference>
<dbReference type="Pfam" id="PF01502">
    <property type="entry name" value="PRA-CH"/>
    <property type="match status" value="1"/>
</dbReference>
<dbReference type="SUPFAM" id="SSF141734">
    <property type="entry name" value="HisI-like"/>
    <property type="match status" value="1"/>
</dbReference>